<gene>
    <name evidence="1" type="primary">rpsH</name>
    <name type="ordered locus">BruAb1_1224</name>
</gene>
<evidence type="ECO:0000255" key="1">
    <source>
        <dbReference type="HAMAP-Rule" id="MF_01302"/>
    </source>
</evidence>
<evidence type="ECO:0000305" key="2"/>
<feature type="chain" id="PRO_0000225858" description="Small ribosomal subunit protein uS8">
    <location>
        <begin position="1"/>
        <end position="132"/>
    </location>
</feature>
<organism>
    <name type="scientific">Brucella abortus biovar 1 (strain 9-941)</name>
    <dbReference type="NCBI Taxonomy" id="262698"/>
    <lineage>
        <taxon>Bacteria</taxon>
        <taxon>Pseudomonadati</taxon>
        <taxon>Pseudomonadota</taxon>
        <taxon>Alphaproteobacteria</taxon>
        <taxon>Hyphomicrobiales</taxon>
        <taxon>Brucellaceae</taxon>
        <taxon>Brucella/Ochrobactrum group</taxon>
        <taxon>Brucella</taxon>
    </lineage>
</organism>
<proteinExistence type="inferred from homology"/>
<reference key="1">
    <citation type="journal article" date="2005" name="J. Bacteriol.">
        <title>Completion of the genome sequence of Brucella abortus and comparison to the highly similar genomes of Brucella melitensis and Brucella suis.</title>
        <authorList>
            <person name="Halling S.M."/>
            <person name="Peterson-Burch B.D."/>
            <person name="Bricker B.J."/>
            <person name="Zuerner R.L."/>
            <person name="Qing Z."/>
            <person name="Li L.-L."/>
            <person name="Kapur V."/>
            <person name="Alt D.P."/>
            <person name="Olsen S.C."/>
        </authorList>
    </citation>
    <scope>NUCLEOTIDE SEQUENCE [LARGE SCALE GENOMIC DNA]</scope>
    <source>
        <strain>9-941</strain>
    </source>
</reference>
<name>RS8_BRUAB</name>
<comment type="function">
    <text evidence="1">One of the primary rRNA binding proteins, it binds directly to 16S rRNA central domain where it helps coordinate assembly of the platform of the 30S subunit.</text>
</comment>
<comment type="subunit">
    <text evidence="1">Part of the 30S ribosomal subunit. Contacts proteins S5 and S12.</text>
</comment>
<comment type="similarity">
    <text evidence="1">Belongs to the universal ribosomal protein uS8 family.</text>
</comment>
<dbReference type="EMBL" id="AE017223">
    <property type="protein sequence ID" value="AAX74562.1"/>
    <property type="molecule type" value="Genomic_DNA"/>
</dbReference>
<dbReference type="RefSeq" id="WP_002964348.1">
    <property type="nucleotide sequence ID" value="NC_006932.1"/>
</dbReference>
<dbReference type="SMR" id="Q57CS2"/>
<dbReference type="EnsemblBacteria" id="AAX74562">
    <property type="protein sequence ID" value="AAX74562"/>
    <property type="gene ID" value="BruAb1_1224"/>
</dbReference>
<dbReference type="GeneID" id="93016453"/>
<dbReference type="KEGG" id="bmb:BruAb1_1224"/>
<dbReference type="HOGENOM" id="CLU_098428_0_0_5"/>
<dbReference type="Proteomes" id="UP000000540">
    <property type="component" value="Chromosome I"/>
</dbReference>
<dbReference type="GO" id="GO:1990904">
    <property type="term" value="C:ribonucleoprotein complex"/>
    <property type="evidence" value="ECO:0007669"/>
    <property type="project" value="UniProtKB-KW"/>
</dbReference>
<dbReference type="GO" id="GO:0005840">
    <property type="term" value="C:ribosome"/>
    <property type="evidence" value="ECO:0007669"/>
    <property type="project" value="UniProtKB-KW"/>
</dbReference>
<dbReference type="GO" id="GO:0019843">
    <property type="term" value="F:rRNA binding"/>
    <property type="evidence" value="ECO:0007669"/>
    <property type="project" value="UniProtKB-UniRule"/>
</dbReference>
<dbReference type="GO" id="GO:0003735">
    <property type="term" value="F:structural constituent of ribosome"/>
    <property type="evidence" value="ECO:0007669"/>
    <property type="project" value="InterPro"/>
</dbReference>
<dbReference type="GO" id="GO:0006412">
    <property type="term" value="P:translation"/>
    <property type="evidence" value="ECO:0007669"/>
    <property type="project" value="UniProtKB-UniRule"/>
</dbReference>
<dbReference type="FunFam" id="3.30.1490.10:FF:000001">
    <property type="entry name" value="30S ribosomal protein S8"/>
    <property type="match status" value="1"/>
</dbReference>
<dbReference type="Gene3D" id="3.30.1370.30">
    <property type="match status" value="1"/>
</dbReference>
<dbReference type="Gene3D" id="3.30.1490.10">
    <property type="match status" value="1"/>
</dbReference>
<dbReference type="HAMAP" id="MF_01302_B">
    <property type="entry name" value="Ribosomal_uS8_B"/>
    <property type="match status" value="1"/>
</dbReference>
<dbReference type="InterPro" id="IPR000630">
    <property type="entry name" value="Ribosomal_uS8"/>
</dbReference>
<dbReference type="InterPro" id="IPR047863">
    <property type="entry name" value="Ribosomal_uS8_CS"/>
</dbReference>
<dbReference type="InterPro" id="IPR035987">
    <property type="entry name" value="Ribosomal_uS8_sf"/>
</dbReference>
<dbReference type="NCBIfam" id="NF001109">
    <property type="entry name" value="PRK00136.1"/>
    <property type="match status" value="1"/>
</dbReference>
<dbReference type="PANTHER" id="PTHR11758">
    <property type="entry name" value="40S RIBOSOMAL PROTEIN S15A"/>
    <property type="match status" value="1"/>
</dbReference>
<dbReference type="Pfam" id="PF00410">
    <property type="entry name" value="Ribosomal_S8"/>
    <property type="match status" value="1"/>
</dbReference>
<dbReference type="SUPFAM" id="SSF56047">
    <property type="entry name" value="Ribosomal protein S8"/>
    <property type="match status" value="1"/>
</dbReference>
<dbReference type="PROSITE" id="PS00053">
    <property type="entry name" value="RIBOSOMAL_S8"/>
    <property type="match status" value="1"/>
</dbReference>
<sequence>MSVSDPLGDMLTRIRNAVGRKKTKVSTPASKLRARVLDVLQAEGYIRAYTQSEFENGKAEIEIELKYYEGVPVIREITRVSKPGRRVYVSVKSIPQVANGLGISILSTPKGVMADHEAREQNVGGELLCRIF</sequence>
<protein>
    <recommendedName>
        <fullName evidence="1">Small ribosomal subunit protein uS8</fullName>
    </recommendedName>
    <alternativeName>
        <fullName evidence="2">30S ribosomal protein S8</fullName>
    </alternativeName>
</protein>
<accession>Q57CS2</accession>
<keyword id="KW-0687">Ribonucleoprotein</keyword>
<keyword id="KW-0689">Ribosomal protein</keyword>
<keyword id="KW-0694">RNA-binding</keyword>
<keyword id="KW-0699">rRNA-binding</keyword>